<proteinExistence type="evidence at protein level"/>
<sequence>MFRAAAPGQLRRAASLLRFQSTLVIAEHANDSLAPITLNTITAAGRLGGEVSCLVAGTKCDKVVQDLCKVAGVAKVLVAQHDAYKGLLPEELTPLILETQKQFSYTHICAGASAFGKNLLPRVAAKLNVAPVSDIIEIKSPDTFVRTIYAGNALCTVKCDEKVKVFSVRGTSFEAAATSGGSASSEKAPSSSSVGISEWLDQKLTKSDRPELTGAKVVVSGGRGLKSGENFKLLYDLADQLHAAVGASRAAVDAGFVPNDMQVGQTGKIVAPELYIAVGISGAIQHLAGMKDSKTIVAINKDPEAPIFQVADYGIVADLFKVVPEMTEILKKK</sequence>
<dbReference type="EMBL" id="AK028118">
    <property type="protein sequence ID" value="BAC25758.1"/>
    <property type="molecule type" value="mRNA"/>
</dbReference>
<dbReference type="EMBL" id="AK032830">
    <property type="protein sequence ID" value="BAC28046.1"/>
    <property type="molecule type" value="mRNA"/>
</dbReference>
<dbReference type="EMBL" id="AK133525">
    <property type="protein sequence ID" value="BAE21705.1"/>
    <property type="molecule type" value="mRNA"/>
</dbReference>
<dbReference type="EMBL" id="AK167572">
    <property type="protein sequence ID" value="BAE39635.1"/>
    <property type="molecule type" value="mRNA"/>
</dbReference>
<dbReference type="EMBL" id="AK168321">
    <property type="protein sequence ID" value="BAE40260.1"/>
    <property type="molecule type" value="mRNA"/>
</dbReference>
<dbReference type="EMBL" id="BC003432">
    <property type="protein sequence ID" value="AAH03432.1"/>
    <property type="molecule type" value="mRNA"/>
</dbReference>
<dbReference type="EMBL" id="BC096645">
    <property type="protein sequence ID" value="AAH96645.1"/>
    <property type="molecule type" value="mRNA"/>
</dbReference>
<dbReference type="CCDS" id="CCDS23204.1"/>
<dbReference type="RefSeq" id="NP_663590.3">
    <property type="nucleotide sequence ID" value="NM_145615.4"/>
</dbReference>
<dbReference type="SMR" id="Q99LC5"/>
<dbReference type="BioGRID" id="225952">
    <property type="interactions" value="47"/>
</dbReference>
<dbReference type="ComplexPortal" id="CPX-865">
    <property type="entry name" value="Electron transfer flavoprotein complex"/>
</dbReference>
<dbReference type="FunCoup" id="Q99LC5">
    <property type="interactions" value="1826"/>
</dbReference>
<dbReference type="IntAct" id="Q99LC5">
    <property type="interactions" value="6"/>
</dbReference>
<dbReference type="MINT" id="Q99LC5"/>
<dbReference type="STRING" id="10090.ENSMUSP00000034866"/>
<dbReference type="GlyGen" id="Q99LC5">
    <property type="glycosylation" value="1 site, 1 O-linked glycan (1 site)"/>
</dbReference>
<dbReference type="iPTMnet" id="Q99LC5"/>
<dbReference type="MetOSite" id="Q99LC5"/>
<dbReference type="PhosphoSitePlus" id="Q99LC5"/>
<dbReference type="SwissPalm" id="Q99LC5"/>
<dbReference type="REPRODUCTION-2DPAGE" id="Q99LC5"/>
<dbReference type="jPOST" id="Q99LC5"/>
<dbReference type="PaxDb" id="10090-ENSMUSP00000034866"/>
<dbReference type="PeptideAtlas" id="Q99LC5"/>
<dbReference type="ProteomicsDB" id="275786"/>
<dbReference type="Pumba" id="Q99LC5"/>
<dbReference type="Antibodypedia" id="14895">
    <property type="antibodies" value="370 antibodies from 32 providers"/>
</dbReference>
<dbReference type="Ensembl" id="ENSMUST00000034866.9">
    <property type="protein sequence ID" value="ENSMUSP00000034866.9"/>
    <property type="gene ID" value="ENSMUSG00000032314.15"/>
</dbReference>
<dbReference type="GeneID" id="110842"/>
<dbReference type="KEGG" id="mmu:110842"/>
<dbReference type="UCSC" id="uc009psl.2">
    <property type="organism name" value="mouse"/>
</dbReference>
<dbReference type="AGR" id="MGI:106092"/>
<dbReference type="CTD" id="2108"/>
<dbReference type="MGI" id="MGI:106092">
    <property type="gene designation" value="Etfa"/>
</dbReference>
<dbReference type="VEuPathDB" id="HostDB:ENSMUSG00000032314"/>
<dbReference type="eggNOG" id="KOG3954">
    <property type="taxonomic scope" value="Eukaryota"/>
</dbReference>
<dbReference type="GeneTree" id="ENSGT00390000013422"/>
<dbReference type="HOGENOM" id="CLU_034178_0_1_1"/>
<dbReference type="InParanoid" id="Q99LC5"/>
<dbReference type="OMA" id="WRPYAEQ"/>
<dbReference type="OrthoDB" id="1715808at2759"/>
<dbReference type="PhylomeDB" id="Q99LC5"/>
<dbReference type="TreeFam" id="TF105763"/>
<dbReference type="Reactome" id="R-MMU-611105">
    <property type="pathway name" value="Respiratory electron transport"/>
</dbReference>
<dbReference type="BioGRID-ORCS" id="110842">
    <property type="hits" value="3 hits in 77 CRISPR screens"/>
</dbReference>
<dbReference type="ChiTaRS" id="Etfa">
    <property type="organism name" value="mouse"/>
</dbReference>
<dbReference type="PRO" id="PR:Q99LC5"/>
<dbReference type="Proteomes" id="UP000000589">
    <property type="component" value="Chromosome 9"/>
</dbReference>
<dbReference type="RNAct" id="Q99LC5">
    <property type="molecule type" value="protein"/>
</dbReference>
<dbReference type="Bgee" id="ENSMUSG00000032314">
    <property type="expression patterns" value="Expressed in cardiac muscle tissue and 269 other cell types or tissues"/>
</dbReference>
<dbReference type="GO" id="GO:0045251">
    <property type="term" value="C:electron transfer flavoprotein complex"/>
    <property type="evidence" value="ECO:0000266"/>
    <property type="project" value="ComplexPortal"/>
</dbReference>
<dbReference type="GO" id="GO:0017133">
    <property type="term" value="C:mitochondrial electron transfer flavoprotein complex"/>
    <property type="evidence" value="ECO:0000304"/>
    <property type="project" value="MGI"/>
</dbReference>
<dbReference type="GO" id="GO:0005759">
    <property type="term" value="C:mitochondrial matrix"/>
    <property type="evidence" value="ECO:0000303"/>
    <property type="project" value="ComplexPortal"/>
</dbReference>
<dbReference type="GO" id="GO:0005739">
    <property type="term" value="C:mitochondrion"/>
    <property type="evidence" value="ECO:0007005"/>
    <property type="project" value="MGI"/>
</dbReference>
<dbReference type="GO" id="GO:0009055">
    <property type="term" value="F:electron transfer activity"/>
    <property type="evidence" value="ECO:0000250"/>
    <property type="project" value="UniProtKB"/>
</dbReference>
<dbReference type="GO" id="GO:0050660">
    <property type="term" value="F:flavin adenine dinucleotide binding"/>
    <property type="evidence" value="ECO:0007669"/>
    <property type="project" value="Ensembl"/>
</dbReference>
<dbReference type="GO" id="GO:0016491">
    <property type="term" value="F:oxidoreductase activity"/>
    <property type="evidence" value="ECO:0007669"/>
    <property type="project" value="Ensembl"/>
</dbReference>
<dbReference type="GO" id="GO:0009063">
    <property type="term" value="P:amino acid catabolic process"/>
    <property type="evidence" value="ECO:0000266"/>
    <property type="project" value="ComplexPortal"/>
</dbReference>
<dbReference type="GO" id="GO:0033539">
    <property type="term" value="P:fatty acid beta-oxidation using acyl-CoA dehydrogenase"/>
    <property type="evidence" value="ECO:0000250"/>
    <property type="project" value="UniProtKB"/>
</dbReference>
<dbReference type="GO" id="GO:0022904">
    <property type="term" value="P:respiratory electron transport chain"/>
    <property type="evidence" value="ECO:0000266"/>
    <property type="project" value="ComplexPortal"/>
</dbReference>
<dbReference type="CDD" id="cd01715">
    <property type="entry name" value="ETF_alpha"/>
    <property type="match status" value="1"/>
</dbReference>
<dbReference type="FunFam" id="3.40.50.620:FF:000041">
    <property type="entry name" value="Electron transfer flavoprotein alpha subunit"/>
    <property type="match status" value="1"/>
</dbReference>
<dbReference type="FunFam" id="3.40.50.1220:FF:000001">
    <property type="entry name" value="Electron transfer flavoprotein, alpha subunit"/>
    <property type="match status" value="1"/>
</dbReference>
<dbReference type="Gene3D" id="3.40.50.620">
    <property type="entry name" value="HUPs"/>
    <property type="match status" value="1"/>
</dbReference>
<dbReference type="Gene3D" id="3.40.50.1220">
    <property type="entry name" value="TPP-binding domain"/>
    <property type="match status" value="1"/>
</dbReference>
<dbReference type="InterPro" id="IPR029035">
    <property type="entry name" value="DHS-like_NAD/FAD-binding_dom"/>
</dbReference>
<dbReference type="InterPro" id="IPR014730">
    <property type="entry name" value="ETF_a/b_N"/>
</dbReference>
<dbReference type="InterPro" id="IPR001308">
    <property type="entry name" value="ETF_a/FixB"/>
</dbReference>
<dbReference type="InterPro" id="IPR033947">
    <property type="entry name" value="ETF_alpha_N"/>
</dbReference>
<dbReference type="InterPro" id="IPR014731">
    <property type="entry name" value="ETF_asu_C"/>
</dbReference>
<dbReference type="InterPro" id="IPR018206">
    <property type="entry name" value="ETF_asu_C_CS"/>
</dbReference>
<dbReference type="InterPro" id="IPR014729">
    <property type="entry name" value="Rossmann-like_a/b/a_fold"/>
</dbReference>
<dbReference type="PANTHER" id="PTHR43153">
    <property type="entry name" value="ELECTRON TRANSFER FLAVOPROTEIN ALPHA"/>
    <property type="match status" value="1"/>
</dbReference>
<dbReference type="PANTHER" id="PTHR43153:SF1">
    <property type="entry name" value="ELECTRON TRANSFER FLAVOPROTEIN SUBUNIT ALPHA, MITOCHONDRIAL"/>
    <property type="match status" value="1"/>
</dbReference>
<dbReference type="Pfam" id="PF01012">
    <property type="entry name" value="ETF"/>
    <property type="match status" value="1"/>
</dbReference>
<dbReference type="Pfam" id="PF00766">
    <property type="entry name" value="ETF_alpha"/>
    <property type="match status" value="1"/>
</dbReference>
<dbReference type="PIRSF" id="PIRSF000089">
    <property type="entry name" value="Electra_flavoP_a"/>
    <property type="match status" value="1"/>
</dbReference>
<dbReference type="SMART" id="SM00893">
    <property type="entry name" value="ETF"/>
    <property type="match status" value="1"/>
</dbReference>
<dbReference type="SUPFAM" id="SSF52402">
    <property type="entry name" value="Adenine nucleotide alpha hydrolases-like"/>
    <property type="match status" value="1"/>
</dbReference>
<dbReference type="SUPFAM" id="SSF52467">
    <property type="entry name" value="DHS-like NAD/FAD-binding domain"/>
    <property type="match status" value="1"/>
</dbReference>
<dbReference type="PROSITE" id="PS00696">
    <property type="entry name" value="ETF_ALPHA"/>
    <property type="match status" value="1"/>
</dbReference>
<feature type="transit peptide" description="Mitochondrion" evidence="2">
    <location>
        <begin position="1"/>
        <end position="19"/>
    </location>
</feature>
<feature type="chain" id="PRO_0000008652" description="Electron transfer flavoprotein subunit alpha, mitochondrial">
    <location>
        <begin position="20"/>
        <end position="333"/>
    </location>
</feature>
<feature type="region of interest" description="Domain I" evidence="1">
    <location>
        <begin position="20"/>
        <end position="204"/>
    </location>
</feature>
<feature type="region of interest" description="Domain II" evidence="1">
    <location>
        <begin position="205"/>
        <end position="333"/>
    </location>
</feature>
<feature type="binding site" evidence="1">
    <location>
        <position position="223"/>
    </location>
    <ligand>
        <name>FAD</name>
        <dbReference type="ChEBI" id="CHEBI:57692"/>
    </ligand>
</feature>
<feature type="binding site" evidence="1">
    <location>
        <position position="248"/>
    </location>
    <ligand>
        <name>FAD</name>
        <dbReference type="ChEBI" id="CHEBI:57692"/>
    </ligand>
</feature>
<feature type="binding site" evidence="1">
    <location>
        <begin position="263"/>
        <end position="266"/>
    </location>
    <ligand>
        <name>FAD</name>
        <dbReference type="ChEBI" id="CHEBI:57692"/>
    </ligand>
</feature>
<feature type="binding site" evidence="1">
    <location>
        <begin position="281"/>
        <end position="286"/>
    </location>
    <ligand>
        <name>FAD</name>
        <dbReference type="ChEBI" id="CHEBI:57692"/>
    </ligand>
</feature>
<feature type="binding site" evidence="1">
    <location>
        <position position="300"/>
    </location>
    <ligand>
        <name>FAD</name>
        <dbReference type="ChEBI" id="CHEBI:57692"/>
    </ligand>
</feature>
<feature type="binding site" evidence="1">
    <location>
        <begin position="318"/>
        <end position="319"/>
    </location>
    <ligand>
        <name>FAD</name>
        <dbReference type="ChEBI" id="CHEBI:57692"/>
    </ligand>
</feature>
<feature type="modified residue" description="N6-acetyllysine; alternate" evidence="6">
    <location>
        <position position="59"/>
    </location>
</feature>
<feature type="modified residue" description="N6-succinyllysine; alternate" evidence="7">
    <location>
        <position position="59"/>
    </location>
</feature>
<feature type="modified residue" description="N6-acetyllysine" evidence="6">
    <location>
        <position position="62"/>
    </location>
</feature>
<feature type="modified residue" description="N6-acetyllysine; alternate" evidence="6 7">
    <location>
        <position position="69"/>
    </location>
</feature>
<feature type="modified residue" description="N6-succinyllysine; alternate" evidence="7">
    <location>
        <position position="69"/>
    </location>
</feature>
<feature type="modified residue" description="N6-acetyllysine" evidence="6">
    <location>
        <position position="75"/>
    </location>
</feature>
<feature type="modified residue" description="N6-acetyllysine; alternate" evidence="6">
    <location>
        <position position="85"/>
    </location>
</feature>
<feature type="modified residue" description="N6-succinyllysine; alternate" evidence="7">
    <location>
        <position position="85"/>
    </location>
</feature>
<feature type="modified residue" description="Phosphothreonine" evidence="5">
    <location>
        <position position="93"/>
    </location>
</feature>
<feature type="modified residue" description="N6-acetyllysine" evidence="6">
    <location>
        <position position="101"/>
    </location>
</feature>
<feature type="modified residue" description="N6-acetyllysine" evidence="6">
    <location>
        <position position="139"/>
    </location>
</feature>
<feature type="modified residue" description="Phosphoserine" evidence="1">
    <location>
        <position position="140"/>
    </location>
</feature>
<feature type="modified residue" description="N6-acetyllysine; alternate" evidence="6">
    <location>
        <position position="158"/>
    </location>
</feature>
<feature type="modified residue" description="N6-succinyllysine; alternate" evidence="7">
    <location>
        <position position="158"/>
    </location>
</feature>
<feature type="modified residue" description="N6-acetyllysine" evidence="6">
    <location>
        <position position="164"/>
    </location>
</feature>
<feature type="modified residue" description="N6-succinyllysine" evidence="7">
    <location>
        <position position="187"/>
    </location>
</feature>
<feature type="modified residue" description="N6-acetyllysine; alternate" evidence="6">
    <location>
        <position position="203"/>
    </location>
</feature>
<feature type="modified residue" description="N6-succinyllysine; alternate" evidence="7">
    <location>
        <position position="203"/>
    </location>
</feature>
<feature type="modified residue" description="N6-succinyllysine" evidence="7">
    <location>
        <position position="216"/>
    </location>
</feature>
<feature type="modified residue" description="N6-acetyllysine; alternate" evidence="6">
    <location>
        <position position="226"/>
    </location>
</feature>
<feature type="modified residue" description="N6-succinyllysine; alternate" evidence="7">
    <location>
        <position position="226"/>
    </location>
</feature>
<feature type="modified residue" description="N6-acetyllysine; alternate" evidence="6">
    <location>
        <position position="232"/>
    </location>
</feature>
<feature type="modified residue" description="N6-succinyllysine; alternate" evidence="7">
    <location>
        <position position="232"/>
    </location>
</feature>
<feature type="modified residue" description="N6-succinyllysine" evidence="7">
    <location>
        <position position="301"/>
    </location>
</feature>
<feature type="sequence conflict" description="In Ref. 1; BAE40260." evidence="4" ref="1">
    <original>Q</original>
    <variation>R</variation>
    <location>
        <position position="20"/>
    </location>
</feature>
<feature type="sequence conflict" description="In Ref. 1; BAE21705." evidence="4" ref="1">
    <original>K</original>
    <variation>E</variation>
    <location>
        <position position="85"/>
    </location>
</feature>
<feature type="sequence conflict" description="In Ref. 1; BAC25758." evidence="4" ref="1">
    <original>R</original>
    <variation>P</variation>
    <location>
        <position position="209"/>
    </location>
</feature>
<feature type="sequence conflict" description="In Ref. 2; AAH03432." evidence="4" ref="2">
    <original>A</original>
    <variation>T</variation>
    <location>
        <position position="288"/>
    </location>
</feature>
<feature type="sequence conflict" description="In Ref. 1; BAC28046." evidence="4" ref="1">
    <original>I</original>
    <variation>V</variation>
    <location>
        <position position="299"/>
    </location>
</feature>
<protein>
    <recommendedName>
        <fullName>Electron transfer flavoprotein subunit alpha, mitochondrial</fullName>
        <shortName>Alpha-ETF</shortName>
    </recommendedName>
</protein>
<reference key="1">
    <citation type="journal article" date="2005" name="Science">
        <title>The transcriptional landscape of the mammalian genome.</title>
        <authorList>
            <person name="Carninci P."/>
            <person name="Kasukawa T."/>
            <person name="Katayama S."/>
            <person name="Gough J."/>
            <person name="Frith M.C."/>
            <person name="Maeda N."/>
            <person name="Oyama R."/>
            <person name="Ravasi T."/>
            <person name="Lenhard B."/>
            <person name="Wells C."/>
            <person name="Kodzius R."/>
            <person name="Shimokawa K."/>
            <person name="Bajic V.B."/>
            <person name="Brenner S.E."/>
            <person name="Batalov S."/>
            <person name="Forrest A.R."/>
            <person name="Zavolan M."/>
            <person name="Davis M.J."/>
            <person name="Wilming L.G."/>
            <person name="Aidinis V."/>
            <person name="Allen J.E."/>
            <person name="Ambesi-Impiombato A."/>
            <person name="Apweiler R."/>
            <person name="Aturaliya R.N."/>
            <person name="Bailey T.L."/>
            <person name="Bansal M."/>
            <person name="Baxter L."/>
            <person name="Beisel K.W."/>
            <person name="Bersano T."/>
            <person name="Bono H."/>
            <person name="Chalk A.M."/>
            <person name="Chiu K.P."/>
            <person name="Choudhary V."/>
            <person name="Christoffels A."/>
            <person name="Clutterbuck D.R."/>
            <person name="Crowe M.L."/>
            <person name="Dalla E."/>
            <person name="Dalrymple B.P."/>
            <person name="de Bono B."/>
            <person name="Della Gatta G."/>
            <person name="di Bernardo D."/>
            <person name="Down T."/>
            <person name="Engstrom P."/>
            <person name="Fagiolini M."/>
            <person name="Faulkner G."/>
            <person name="Fletcher C.F."/>
            <person name="Fukushima T."/>
            <person name="Furuno M."/>
            <person name="Futaki S."/>
            <person name="Gariboldi M."/>
            <person name="Georgii-Hemming P."/>
            <person name="Gingeras T.R."/>
            <person name="Gojobori T."/>
            <person name="Green R.E."/>
            <person name="Gustincich S."/>
            <person name="Harbers M."/>
            <person name="Hayashi Y."/>
            <person name="Hensch T.K."/>
            <person name="Hirokawa N."/>
            <person name="Hill D."/>
            <person name="Huminiecki L."/>
            <person name="Iacono M."/>
            <person name="Ikeo K."/>
            <person name="Iwama A."/>
            <person name="Ishikawa T."/>
            <person name="Jakt M."/>
            <person name="Kanapin A."/>
            <person name="Katoh M."/>
            <person name="Kawasawa Y."/>
            <person name="Kelso J."/>
            <person name="Kitamura H."/>
            <person name="Kitano H."/>
            <person name="Kollias G."/>
            <person name="Krishnan S.P."/>
            <person name="Kruger A."/>
            <person name="Kummerfeld S.K."/>
            <person name="Kurochkin I.V."/>
            <person name="Lareau L.F."/>
            <person name="Lazarevic D."/>
            <person name="Lipovich L."/>
            <person name="Liu J."/>
            <person name="Liuni S."/>
            <person name="McWilliam S."/>
            <person name="Madan Babu M."/>
            <person name="Madera M."/>
            <person name="Marchionni L."/>
            <person name="Matsuda H."/>
            <person name="Matsuzawa S."/>
            <person name="Miki H."/>
            <person name="Mignone F."/>
            <person name="Miyake S."/>
            <person name="Morris K."/>
            <person name="Mottagui-Tabar S."/>
            <person name="Mulder N."/>
            <person name="Nakano N."/>
            <person name="Nakauchi H."/>
            <person name="Ng P."/>
            <person name="Nilsson R."/>
            <person name="Nishiguchi S."/>
            <person name="Nishikawa S."/>
            <person name="Nori F."/>
            <person name="Ohara O."/>
            <person name="Okazaki Y."/>
            <person name="Orlando V."/>
            <person name="Pang K.C."/>
            <person name="Pavan W.J."/>
            <person name="Pavesi G."/>
            <person name="Pesole G."/>
            <person name="Petrovsky N."/>
            <person name="Piazza S."/>
            <person name="Reed J."/>
            <person name="Reid J.F."/>
            <person name="Ring B.Z."/>
            <person name="Ringwald M."/>
            <person name="Rost B."/>
            <person name="Ruan Y."/>
            <person name="Salzberg S.L."/>
            <person name="Sandelin A."/>
            <person name="Schneider C."/>
            <person name="Schoenbach C."/>
            <person name="Sekiguchi K."/>
            <person name="Semple C.A."/>
            <person name="Seno S."/>
            <person name="Sessa L."/>
            <person name="Sheng Y."/>
            <person name="Shibata Y."/>
            <person name="Shimada H."/>
            <person name="Shimada K."/>
            <person name="Silva D."/>
            <person name="Sinclair B."/>
            <person name="Sperling S."/>
            <person name="Stupka E."/>
            <person name="Sugiura K."/>
            <person name="Sultana R."/>
            <person name="Takenaka Y."/>
            <person name="Taki K."/>
            <person name="Tammoja K."/>
            <person name="Tan S.L."/>
            <person name="Tang S."/>
            <person name="Taylor M.S."/>
            <person name="Tegner J."/>
            <person name="Teichmann S.A."/>
            <person name="Ueda H.R."/>
            <person name="van Nimwegen E."/>
            <person name="Verardo R."/>
            <person name="Wei C.L."/>
            <person name="Yagi K."/>
            <person name="Yamanishi H."/>
            <person name="Zabarovsky E."/>
            <person name="Zhu S."/>
            <person name="Zimmer A."/>
            <person name="Hide W."/>
            <person name="Bult C."/>
            <person name="Grimmond S.M."/>
            <person name="Teasdale R.D."/>
            <person name="Liu E.T."/>
            <person name="Brusic V."/>
            <person name="Quackenbush J."/>
            <person name="Wahlestedt C."/>
            <person name="Mattick J.S."/>
            <person name="Hume D.A."/>
            <person name="Kai C."/>
            <person name="Sasaki D."/>
            <person name="Tomaru Y."/>
            <person name="Fukuda S."/>
            <person name="Kanamori-Katayama M."/>
            <person name="Suzuki M."/>
            <person name="Aoki J."/>
            <person name="Arakawa T."/>
            <person name="Iida J."/>
            <person name="Imamura K."/>
            <person name="Itoh M."/>
            <person name="Kato T."/>
            <person name="Kawaji H."/>
            <person name="Kawagashira N."/>
            <person name="Kawashima T."/>
            <person name="Kojima M."/>
            <person name="Kondo S."/>
            <person name="Konno H."/>
            <person name="Nakano K."/>
            <person name="Ninomiya N."/>
            <person name="Nishio T."/>
            <person name="Okada M."/>
            <person name="Plessy C."/>
            <person name="Shibata K."/>
            <person name="Shiraki T."/>
            <person name="Suzuki S."/>
            <person name="Tagami M."/>
            <person name="Waki K."/>
            <person name="Watahiki A."/>
            <person name="Okamura-Oho Y."/>
            <person name="Suzuki H."/>
            <person name="Kawai J."/>
            <person name="Hayashizaki Y."/>
        </authorList>
    </citation>
    <scope>NUCLEOTIDE SEQUENCE [LARGE SCALE MRNA]</scope>
    <source>
        <strain>C57BL/6J</strain>
        <strain>DBA/2J</strain>
        <tissue>Ovary</tissue>
        <tissue>Placenta</tissue>
        <tissue>Small intestine</tissue>
        <tissue>Uterus</tissue>
    </source>
</reference>
<reference key="2">
    <citation type="journal article" date="2004" name="Genome Res.">
        <title>The status, quality, and expansion of the NIH full-length cDNA project: the Mammalian Gene Collection (MGC).</title>
        <authorList>
            <consortium name="The MGC Project Team"/>
        </authorList>
    </citation>
    <scope>NUCLEOTIDE SEQUENCE [LARGE SCALE MRNA]</scope>
    <source>
        <strain>C57BL/6J</strain>
        <tissue>Mammary gland</tissue>
    </source>
</reference>
<reference key="3">
    <citation type="submission" date="2007-07" db="UniProtKB">
        <authorList>
            <person name="Lubec G."/>
            <person name="Klug S."/>
            <person name="Yang J.W."/>
            <person name="Zigmond M."/>
        </authorList>
    </citation>
    <scope>PROTEIN SEQUENCE OF 86-117 AND 233-249</scope>
    <scope>IDENTIFICATION BY MASS SPECTROMETRY</scope>
    <source>
        <tissue>Brain</tissue>
        <tissue>Hippocampus</tissue>
    </source>
</reference>
<reference key="4">
    <citation type="journal article" date="2010" name="Cell">
        <title>A tissue-specific atlas of mouse protein phosphorylation and expression.</title>
        <authorList>
            <person name="Huttlin E.L."/>
            <person name="Jedrychowski M.P."/>
            <person name="Elias J.E."/>
            <person name="Goswami T."/>
            <person name="Rad R."/>
            <person name="Beausoleil S.A."/>
            <person name="Villen J."/>
            <person name="Haas W."/>
            <person name="Sowa M.E."/>
            <person name="Gygi S.P."/>
        </authorList>
    </citation>
    <scope>PHOSPHORYLATION [LARGE SCALE ANALYSIS] AT THR-93</scope>
    <scope>IDENTIFICATION BY MASS SPECTROMETRY [LARGE SCALE ANALYSIS]</scope>
    <source>
        <tissue>Brain</tissue>
        <tissue>Brown adipose tissue</tissue>
        <tissue>Heart</tissue>
        <tissue>Kidney</tissue>
        <tissue>Liver</tissue>
        <tissue>Lung</tissue>
        <tissue>Pancreas</tissue>
        <tissue>Spleen</tissue>
        <tissue>Testis</tissue>
    </source>
</reference>
<reference key="5">
    <citation type="journal article" date="2013" name="Mol. Cell">
        <title>SIRT5-mediated lysine desuccinylation impacts diverse metabolic pathways.</title>
        <authorList>
            <person name="Park J."/>
            <person name="Chen Y."/>
            <person name="Tishkoff D.X."/>
            <person name="Peng C."/>
            <person name="Tan M."/>
            <person name="Dai L."/>
            <person name="Xie Z."/>
            <person name="Zhang Y."/>
            <person name="Zwaans B.M."/>
            <person name="Skinner M.E."/>
            <person name="Lombard D.B."/>
            <person name="Zhao Y."/>
        </authorList>
    </citation>
    <scope>ACETYLATION [LARGE SCALE ANALYSIS] AT LYS-69</scope>
    <scope>SUCCINYLATION [LARGE SCALE ANALYSIS] AT LYS-59; LYS-69; LYS-85; LYS-158; LYS-187; LYS-203; LYS-216; LYS-226; LYS-232 AND LYS-301</scope>
    <scope>IDENTIFICATION BY MASS SPECTROMETRY [LARGE SCALE ANALYSIS]</scope>
    <source>
        <tissue>Embryonic fibroblast</tissue>
        <tissue>Liver</tissue>
    </source>
</reference>
<reference key="6">
    <citation type="journal article" date="2013" name="Proc. Natl. Acad. Sci. U.S.A.">
        <title>Label-free quantitative proteomics of the lysine acetylome in mitochondria identifies substrates of SIRT3 in metabolic pathways.</title>
        <authorList>
            <person name="Rardin M.J."/>
            <person name="Newman J.C."/>
            <person name="Held J.M."/>
            <person name="Cusack M.P."/>
            <person name="Sorensen D.J."/>
            <person name="Li B."/>
            <person name="Schilling B."/>
            <person name="Mooney S.D."/>
            <person name="Kahn C.R."/>
            <person name="Verdin E."/>
            <person name="Gibson B.W."/>
        </authorList>
    </citation>
    <scope>ACETYLATION [LARGE SCALE ANALYSIS] AT LYS-59; LYS-62; LYS-69; LYS-75; LYS-85; LYS-101; LYS-139; LYS-158; LYS-164; LYS-203; LYS-226 AND LYS-232</scope>
    <scope>IDENTIFICATION BY MASS SPECTROMETRY [LARGE SCALE ANALYSIS]</scope>
    <source>
        <tissue>Liver</tissue>
    </source>
</reference>
<reference key="7">
    <citation type="journal article" date="2019" name="Exp. Cell Res.">
        <title>Fam208a orchestrates interaction protein network essential for early embryonic development and cell division.</title>
        <authorList>
            <person name="Gresakova V."/>
            <person name="Novosadova V."/>
            <person name="Prochazkova M."/>
            <person name="Bhargava S."/>
            <person name="Jenickova I."/>
            <person name="Prochazka J."/>
            <person name="Sedlacek R."/>
        </authorList>
    </citation>
    <scope>INTERACTION WITH TASOR</scope>
    <scope>TISSUE SPECIFICITY</scope>
</reference>
<keyword id="KW-0007">Acetylation</keyword>
<keyword id="KW-0903">Direct protein sequencing</keyword>
<keyword id="KW-0249">Electron transport</keyword>
<keyword id="KW-0274">FAD</keyword>
<keyword id="KW-0285">Flavoprotein</keyword>
<keyword id="KW-0496">Mitochondrion</keyword>
<keyword id="KW-0597">Phosphoprotein</keyword>
<keyword id="KW-1185">Reference proteome</keyword>
<keyword id="KW-0809">Transit peptide</keyword>
<keyword id="KW-0813">Transport</keyword>
<gene>
    <name type="primary">Etfa</name>
</gene>
<evidence type="ECO:0000250" key="1">
    <source>
        <dbReference type="UniProtKB" id="P13804"/>
    </source>
</evidence>
<evidence type="ECO:0000255" key="2"/>
<evidence type="ECO:0000269" key="3">
    <source>
    </source>
</evidence>
<evidence type="ECO:0000305" key="4"/>
<evidence type="ECO:0007744" key="5">
    <source>
    </source>
</evidence>
<evidence type="ECO:0007744" key="6">
    <source>
    </source>
</evidence>
<evidence type="ECO:0007744" key="7">
    <source>
    </source>
</evidence>
<organism>
    <name type="scientific">Mus musculus</name>
    <name type="common">Mouse</name>
    <dbReference type="NCBI Taxonomy" id="10090"/>
    <lineage>
        <taxon>Eukaryota</taxon>
        <taxon>Metazoa</taxon>
        <taxon>Chordata</taxon>
        <taxon>Craniata</taxon>
        <taxon>Vertebrata</taxon>
        <taxon>Euteleostomi</taxon>
        <taxon>Mammalia</taxon>
        <taxon>Eutheria</taxon>
        <taxon>Euarchontoglires</taxon>
        <taxon>Glires</taxon>
        <taxon>Rodentia</taxon>
        <taxon>Myomorpha</taxon>
        <taxon>Muroidea</taxon>
        <taxon>Muridae</taxon>
        <taxon>Murinae</taxon>
        <taxon>Mus</taxon>
        <taxon>Mus</taxon>
    </lineage>
</organism>
<comment type="function">
    <text evidence="1">Heterodimeric electron transfer flavoprotein that accepts electrons from several mitochondrial dehydrogenases, including acyl-CoA dehydrogenases, glutaryl-CoA and sarcosine dehydrogenase. It transfers the electrons to the main mitochondrial respiratory chain via ETF-ubiquinone oxidoreductase (ETF dehydrogenase). Required for normal mitochondrial fatty acid oxidation and normal amino acid metabolism.</text>
</comment>
<comment type="cofactor">
    <cofactor evidence="1">
        <name>FAD</name>
        <dbReference type="ChEBI" id="CHEBI:57692"/>
    </cofactor>
    <text evidence="1">Binds 1 FAD per dimer.</text>
</comment>
<comment type="subunit">
    <text evidence="1 3">Heterodimer composed of ETFA and ETFB. Identified in a complex that contains ETFA, ETFB and ETFRF1. Interaction with ETFRF1 promotes dissociation of the bound FAD and loss of electron transfer activity (By similarity). Interacts with TASOR (PubMed:31112734).</text>
</comment>
<comment type="subcellular location">
    <subcellularLocation>
        <location evidence="1">Mitochondrion matrix</location>
    </subcellularLocation>
</comment>
<comment type="tissue specificity">
    <text evidence="3">Expressed in the spermatogonia, spermatocytes, ovary and granular cells within the cerebellum.</text>
</comment>
<comment type="domain">
    <text evidence="1">Domain I shares an identical polypeptide fold with the beta subunit ETFB though there is no sequence similarity.</text>
</comment>
<comment type="similarity">
    <text evidence="4">Belongs to the ETF alpha-subunit/FixB family.</text>
</comment>
<name>ETFA_MOUSE</name>
<accession>Q99LC5</accession>
<accession>Q3THD7</accession>
<accession>Q3V000</accession>
<accession>Q4V9X5</accession>
<accession>Q8BMD3</accession>
<accession>Q8BMU7</accession>